<dbReference type="EC" id="3.4.24.39"/>
<dbReference type="EMBL" id="CH445327">
    <property type="protein sequence ID" value="EAT90389.1"/>
    <property type="molecule type" value="Genomic_DNA"/>
</dbReference>
<dbReference type="RefSeq" id="XP_001792793.1">
    <property type="nucleotide sequence ID" value="XM_001792741.1"/>
</dbReference>
<dbReference type="SMR" id="Q0V1D7"/>
<dbReference type="EnsemblFungi" id="SNOT_02177">
    <property type="protein sequence ID" value="SNOT_02177"/>
    <property type="gene ID" value="SNOG_02177"/>
</dbReference>
<dbReference type="GeneID" id="5969643"/>
<dbReference type="KEGG" id="pno:SNOG_02177"/>
<dbReference type="VEuPathDB" id="FungiDB:JI435_021770"/>
<dbReference type="eggNOG" id="ENOG502SGF5">
    <property type="taxonomic scope" value="Eukaryota"/>
</dbReference>
<dbReference type="HOGENOM" id="CLU_039313_0_0_1"/>
<dbReference type="InParanoid" id="Q0V1D7"/>
<dbReference type="OMA" id="ATQVYQN"/>
<dbReference type="OrthoDB" id="412874at2759"/>
<dbReference type="BRENDA" id="3.4.24.39">
    <property type="organism ID" value="7864"/>
</dbReference>
<dbReference type="Proteomes" id="UP000001055">
    <property type="component" value="Unassembled WGS sequence"/>
</dbReference>
<dbReference type="GO" id="GO:0005576">
    <property type="term" value="C:extracellular region"/>
    <property type="evidence" value="ECO:0007669"/>
    <property type="project" value="UniProtKB-SubCell"/>
</dbReference>
<dbReference type="GO" id="GO:0046872">
    <property type="term" value="F:metal ion binding"/>
    <property type="evidence" value="ECO:0007669"/>
    <property type="project" value="UniProtKB-KW"/>
</dbReference>
<dbReference type="GO" id="GO:0004222">
    <property type="term" value="F:metalloendopeptidase activity"/>
    <property type="evidence" value="ECO:0007669"/>
    <property type="project" value="InterPro"/>
</dbReference>
<dbReference type="GO" id="GO:0006508">
    <property type="term" value="P:proteolysis"/>
    <property type="evidence" value="ECO:0007669"/>
    <property type="project" value="UniProtKB-KW"/>
</dbReference>
<dbReference type="CDD" id="cd11008">
    <property type="entry name" value="M35_deuterolysin_like"/>
    <property type="match status" value="1"/>
</dbReference>
<dbReference type="Gene3D" id="2.60.40.2970">
    <property type="match status" value="1"/>
</dbReference>
<dbReference type="Gene3D" id="3.40.390.10">
    <property type="entry name" value="Collagenase (Catalytic Domain)"/>
    <property type="match status" value="1"/>
</dbReference>
<dbReference type="InterPro" id="IPR050414">
    <property type="entry name" value="Fungal_M35_metalloproteases"/>
</dbReference>
<dbReference type="InterPro" id="IPR024079">
    <property type="entry name" value="MetalloPept_cat_dom_sf"/>
</dbReference>
<dbReference type="InterPro" id="IPR001384">
    <property type="entry name" value="Peptidase_M35"/>
</dbReference>
<dbReference type="PANTHER" id="PTHR37016">
    <property type="match status" value="1"/>
</dbReference>
<dbReference type="PANTHER" id="PTHR37016:SF2">
    <property type="entry name" value="NEUTRAL PROTEASE 2 HOMOLOG SNOG_02177"/>
    <property type="match status" value="1"/>
</dbReference>
<dbReference type="Pfam" id="PF02102">
    <property type="entry name" value="Peptidase_M35"/>
    <property type="match status" value="1"/>
</dbReference>
<dbReference type="PRINTS" id="PR00768">
    <property type="entry name" value="DEUTEROLYSIN"/>
</dbReference>
<dbReference type="SUPFAM" id="SSF55486">
    <property type="entry name" value="Metalloproteases ('zincins'), catalytic domain"/>
    <property type="match status" value="1"/>
</dbReference>
<feature type="signal peptide" evidence="2">
    <location>
        <begin position="1"/>
        <end position="19"/>
    </location>
</feature>
<feature type="propeptide" id="PRO_0000407130" evidence="1">
    <location>
        <begin position="20"/>
        <end position="182"/>
    </location>
</feature>
<feature type="chain" id="PRO_0000407131" description="Neutral protease 2 homolog SNOG_02177">
    <location>
        <begin position="183"/>
        <end position="354"/>
    </location>
</feature>
<feature type="active site" evidence="1">
    <location>
        <position position="307"/>
    </location>
</feature>
<feature type="binding site" evidence="1">
    <location>
        <position position="306"/>
    </location>
    <ligand>
        <name>Zn(2+)</name>
        <dbReference type="ChEBI" id="CHEBI:29105"/>
        <note>catalytic</note>
    </ligand>
</feature>
<feature type="binding site" evidence="1">
    <location>
        <position position="310"/>
    </location>
    <ligand>
        <name>Zn(2+)</name>
        <dbReference type="ChEBI" id="CHEBI:29105"/>
        <note>catalytic</note>
    </ligand>
</feature>
<feature type="glycosylation site" description="N-linked (GlcNAc...) asparagine" evidence="2">
    <location>
        <position position="214"/>
    </location>
</feature>
<feature type="disulfide bond" evidence="1">
    <location>
        <begin position="186"/>
        <end position="257"/>
    </location>
</feature>
<feature type="disulfide bond" evidence="1">
    <location>
        <begin position="264"/>
        <end position="282"/>
    </location>
</feature>
<sequence>MKFQILSVAALASLASAVSDALDKRDSPLDVSLEVTDNTNVKATIKNTGTEDLKLFKTGTFLDDSHVEKVEVFRSGKQPEQVAFEGLRLRVSTANLDESAFKILKAGETIEAAFDIAVAHDLSVGGDFDLLTEGAFAYANLDSTSIAGAVPFTSNKVTTAVDGAKAGKVRRDWIDLAKRTIVQSDCTGSRGTATRTALSNCASLARTAANAAVNNSAKLNEYFKSTSSSTASSVQTVYNRIATQCGSTTSGDSTQYCSDILGACAGGVLAYTSPSTSQMVNCPLFFNQSPLSSQCHAQDQATTILHEMTHLRQVKGTSDYGGYGYQFVRSLSAAQNLNHADTYTLFAQALYAQC</sequence>
<proteinExistence type="inferred from homology"/>
<reference key="1">
    <citation type="journal article" date="2007" name="Plant Cell">
        <title>Dothideomycete-plant interactions illuminated by genome sequencing and EST analysis of the wheat pathogen Stagonospora nodorum.</title>
        <authorList>
            <person name="Hane J.K."/>
            <person name="Lowe R.G.T."/>
            <person name="Solomon P.S."/>
            <person name="Tan K.-C."/>
            <person name="Schoch C.L."/>
            <person name="Spatafora J.W."/>
            <person name="Crous P.W."/>
            <person name="Kodira C.D."/>
            <person name="Birren B.W."/>
            <person name="Galagan J.E."/>
            <person name="Torriani S.F.F."/>
            <person name="McDonald B.A."/>
            <person name="Oliver R.P."/>
        </authorList>
    </citation>
    <scope>NUCLEOTIDE SEQUENCE [LARGE SCALE GENOMIC DNA]</scope>
    <source>
        <strain>SN15 / ATCC MYA-4574 / FGSC 10173</strain>
    </source>
</reference>
<accession>Q0V1D7</accession>
<keyword id="KW-0165">Cleavage on pair of basic residues</keyword>
<keyword id="KW-1015">Disulfide bond</keyword>
<keyword id="KW-0325">Glycoprotein</keyword>
<keyword id="KW-0378">Hydrolase</keyword>
<keyword id="KW-0479">Metal-binding</keyword>
<keyword id="KW-0482">Metalloprotease</keyword>
<keyword id="KW-0645">Protease</keyword>
<keyword id="KW-0964">Secreted</keyword>
<keyword id="KW-0732">Signal</keyword>
<keyword id="KW-0862">Zinc</keyword>
<keyword id="KW-0865">Zymogen</keyword>
<organism>
    <name type="scientific">Phaeosphaeria nodorum (strain SN15 / ATCC MYA-4574 / FGSC 10173)</name>
    <name type="common">Glume blotch fungus</name>
    <name type="synonym">Parastagonospora nodorum</name>
    <dbReference type="NCBI Taxonomy" id="321614"/>
    <lineage>
        <taxon>Eukaryota</taxon>
        <taxon>Fungi</taxon>
        <taxon>Dikarya</taxon>
        <taxon>Ascomycota</taxon>
        <taxon>Pezizomycotina</taxon>
        <taxon>Dothideomycetes</taxon>
        <taxon>Pleosporomycetidae</taxon>
        <taxon>Pleosporales</taxon>
        <taxon>Pleosporineae</taxon>
        <taxon>Phaeosphaeriaceae</taxon>
        <taxon>Parastagonospora</taxon>
    </lineage>
</organism>
<gene>
    <name type="ORF">SNOG_02177</name>
</gene>
<name>NPIIB_PHANO</name>
<evidence type="ECO:0000250" key="1"/>
<evidence type="ECO:0000255" key="2"/>
<evidence type="ECO:0000305" key="3"/>
<comment type="function">
    <text evidence="1">Secreted metalloproteinase that allows assimilation of proteinaceous substrates. Shows high activities on basic nuclear substrates such as histone and protamine (By similarity).</text>
</comment>
<comment type="catalytic activity">
    <reaction>
        <text>Preferential cleavage of bonds with hydrophobic residues in P1'. Also 3-Asn-|-Gln-4 and 8-Gly-|-Ser-9 bonds in insulin B chain.</text>
        <dbReference type="EC" id="3.4.24.39"/>
    </reaction>
</comment>
<comment type="cofactor">
    <cofactor evidence="1">
        <name>Zn(2+)</name>
        <dbReference type="ChEBI" id="CHEBI:29105"/>
    </cofactor>
    <text evidence="1">Binds 1 zinc ion per subunit.</text>
</comment>
<comment type="subcellular location">
    <subcellularLocation>
        <location evidence="1">Secreted</location>
    </subcellularLocation>
</comment>
<comment type="similarity">
    <text evidence="3">Belongs to the peptidase M35 family.</text>
</comment>
<protein>
    <recommendedName>
        <fullName>Neutral protease 2 homolog SNOG_02177</fullName>
        <ecNumber>3.4.24.39</ecNumber>
    </recommendedName>
    <alternativeName>
        <fullName>Deuterolysin SNOG_02177</fullName>
    </alternativeName>
</protein>